<reference key="1">
    <citation type="journal article" date="1997" name="Nature">
        <title>The complete genome sequence of the hyperthermophilic, sulphate-reducing archaeon Archaeoglobus fulgidus.</title>
        <authorList>
            <person name="Klenk H.-P."/>
            <person name="Clayton R.A."/>
            <person name="Tomb J.-F."/>
            <person name="White O."/>
            <person name="Nelson K.E."/>
            <person name="Ketchum K.A."/>
            <person name="Dodson R.J."/>
            <person name="Gwinn M.L."/>
            <person name="Hickey E.K."/>
            <person name="Peterson J.D."/>
            <person name="Richardson D.L."/>
            <person name="Kerlavage A.R."/>
            <person name="Graham D.E."/>
            <person name="Kyrpides N.C."/>
            <person name="Fleischmann R.D."/>
            <person name="Quackenbush J."/>
            <person name="Lee N.H."/>
            <person name="Sutton G.G."/>
            <person name="Gill S.R."/>
            <person name="Kirkness E.F."/>
            <person name="Dougherty B.A."/>
            <person name="McKenney K."/>
            <person name="Adams M.D."/>
            <person name="Loftus B.J."/>
            <person name="Peterson S.N."/>
            <person name="Reich C.I."/>
            <person name="McNeil L.K."/>
            <person name="Badger J.H."/>
            <person name="Glodek A."/>
            <person name="Zhou L."/>
            <person name="Overbeek R."/>
            <person name="Gocayne J.D."/>
            <person name="Weidman J.F."/>
            <person name="McDonald L.A."/>
            <person name="Utterback T.R."/>
            <person name="Cotton M.D."/>
            <person name="Spriggs T."/>
            <person name="Artiach P."/>
            <person name="Kaine B.P."/>
            <person name="Sykes S.M."/>
            <person name="Sadow P.W."/>
            <person name="D'Andrea K.P."/>
            <person name="Bowman C."/>
            <person name="Fujii C."/>
            <person name="Garland S.A."/>
            <person name="Mason T.M."/>
            <person name="Olsen G.J."/>
            <person name="Fraser C.M."/>
            <person name="Smith H.O."/>
            <person name="Woese C.R."/>
            <person name="Venter J.C."/>
        </authorList>
    </citation>
    <scope>NUCLEOTIDE SEQUENCE [LARGE SCALE GENOMIC DNA]</scope>
    <source>
        <strain>ATCC 49558 / DSM 4304 / JCM 9628 / NBRC 100126 / VC-16</strain>
    </source>
</reference>
<comment type="function">
    <text evidence="1">Involved in the catabolism of quinolinic acid (QA).</text>
</comment>
<comment type="catalytic activity">
    <reaction>
        <text>nicotinate beta-D-ribonucleotide + CO2 + diphosphate = quinolinate + 5-phospho-alpha-D-ribose 1-diphosphate + 2 H(+)</text>
        <dbReference type="Rhea" id="RHEA:12733"/>
        <dbReference type="ChEBI" id="CHEBI:15378"/>
        <dbReference type="ChEBI" id="CHEBI:16526"/>
        <dbReference type="ChEBI" id="CHEBI:29959"/>
        <dbReference type="ChEBI" id="CHEBI:33019"/>
        <dbReference type="ChEBI" id="CHEBI:57502"/>
        <dbReference type="ChEBI" id="CHEBI:58017"/>
        <dbReference type="EC" id="2.4.2.19"/>
    </reaction>
</comment>
<comment type="pathway">
    <text>Cofactor biosynthesis; NAD(+) biosynthesis; nicotinate D-ribonucleotide from quinolinate: step 1/1.</text>
</comment>
<comment type="subunit">
    <text evidence="1">Hexamer formed by 3 homodimers.</text>
</comment>
<comment type="similarity">
    <text evidence="2">Belongs to the NadC/ModD family.</text>
</comment>
<accession>O28439</accession>
<gene>
    <name type="primary">nadC</name>
    <name type="ordered locus">AF_1839</name>
</gene>
<evidence type="ECO:0000250" key="1"/>
<evidence type="ECO:0000305" key="2"/>
<sequence>MPYGDVTAIPTKDVEAVIVSKGEGVLAGVGVVKILFDLAEIVVMESKKDGEPIKPGDVVMRLRGKSDSILATERLAINILMRMSGIATATAKMVERARRVNPKVVVAATRKTTPGFRIFEKMAVEIGGGDAHRFSLSDCLMLKDNHIAVAGSLERAMKVKRSFTKKLEVEVGSVGDAIKAAEFGADIIMLDNFTPEMVAEAVEELRRRGLREKVIIEVSGSVTPENVAEFAAMDVDVISSGYITHSAPALDFSLRVLQ</sequence>
<protein>
    <recommendedName>
        <fullName>Probable nicotinate-nucleotide pyrophosphorylase [carboxylating]</fullName>
        <ecNumber>2.4.2.19</ecNumber>
    </recommendedName>
    <alternativeName>
        <fullName>Quinolinate phosphoribosyltransferase [decarboxylating]</fullName>
        <shortName>QAPRTase</shortName>
    </alternativeName>
</protein>
<organism>
    <name type="scientific">Archaeoglobus fulgidus (strain ATCC 49558 / DSM 4304 / JCM 9628 / NBRC 100126 / VC-16)</name>
    <dbReference type="NCBI Taxonomy" id="224325"/>
    <lineage>
        <taxon>Archaea</taxon>
        <taxon>Methanobacteriati</taxon>
        <taxon>Methanobacteriota</taxon>
        <taxon>Archaeoglobi</taxon>
        <taxon>Archaeoglobales</taxon>
        <taxon>Archaeoglobaceae</taxon>
        <taxon>Archaeoglobus</taxon>
    </lineage>
</organism>
<name>NADC_ARCFU</name>
<keyword id="KW-0328">Glycosyltransferase</keyword>
<keyword id="KW-0662">Pyridine nucleotide biosynthesis</keyword>
<keyword id="KW-1185">Reference proteome</keyword>
<keyword id="KW-0808">Transferase</keyword>
<dbReference type="EC" id="2.4.2.19"/>
<dbReference type="EMBL" id="AE000782">
    <property type="protein sequence ID" value="AAB89414.1"/>
    <property type="molecule type" value="Genomic_DNA"/>
</dbReference>
<dbReference type="PIR" id="F69479">
    <property type="entry name" value="F69479"/>
</dbReference>
<dbReference type="SMR" id="O28439"/>
<dbReference type="STRING" id="224325.AF_1839"/>
<dbReference type="PaxDb" id="224325-AF_1839"/>
<dbReference type="EnsemblBacteria" id="AAB89414">
    <property type="protein sequence ID" value="AAB89414"/>
    <property type="gene ID" value="AF_1839"/>
</dbReference>
<dbReference type="KEGG" id="afu:AF_1839"/>
<dbReference type="eggNOG" id="arCOG01482">
    <property type="taxonomic scope" value="Archaea"/>
</dbReference>
<dbReference type="HOGENOM" id="CLU_039622_2_0_2"/>
<dbReference type="OrthoDB" id="115072at2157"/>
<dbReference type="PhylomeDB" id="O28439"/>
<dbReference type="UniPathway" id="UPA00253">
    <property type="reaction ID" value="UER00331"/>
</dbReference>
<dbReference type="Proteomes" id="UP000002199">
    <property type="component" value="Chromosome"/>
</dbReference>
<dbReference type="GO" id="GO:0005737">
    <property type="term" value="C:cytoplasm"/>
    <property type="evidence" value="ECO:0007669"/>
    <property type="project" value="TreeGrafter"/>
</dbReference>
<dbReference type="GO" id="GO:0004514">
    <property type="term" value="F:nicotinate-nucleotide diphosphorylase (carboxylating) activity"/>
    <property type="evidence" value="ECO:0007669"/>
    <property type="project" value="UniProtKB-EC"/>
</dbReference>
<dbReference type="GO" id="GO:0009435">
    <property type="term" value="P:NAD biosynthetic process"/>
    <property type="evidence" value="ECO:0007669"/>
    <property type="project" value="UniProtKB-UniPathway"/>
</dbReference>
<dbReference type="GO" id="GO:0034213">
    <property type="term" value="P:quinolinate catabolic process"/>
    <property type="evidence" value="ECO:0007669"/>
    <property type="project" value="TreeGrafter"/>
</dbReference>
<dbReference type="CDD" id="cd01572">
    <property type="entry name" value="QPRTase"/>
    <property type="match status" value="1"/>
</dbReference>
<dbReference type="FunFam" id="3.20.20.70:FF:000030">
    <property type="entry name" value="Nicotinate-nucleotide pyrophosphorylase, carboxylating"/>
    <property type="match status" value="1"/>
</dbReference>
<dbReference type="Gene3D" id="3.20.20.70">
    <property type="entry name" value="Aldolase class I"/>
    <property type="match status" value="1"/>
</dbReference>
<dbReference type="Gene3D" id="3.90.1170.20">
    <property type="entry name" value="Quinolinate phosphoribosyl transferase, N-terminal domain"/>
    <property type="match status" value="1"/>
</dbReference>
<dbReference type="InterPro" id="IPR013785">
    <property type="entry name" value="Aldolase_TIM"/>
</dbReference>
<dbReference type="InterPro" id="IPR004393">
    <property type="entry name" value="NadC"/>
</dbReference>
<dbReference type="InterPro" id="IPR027277">
    <property type="entry name" value="NadC/ModD"/>
</dbReference>
<dbReference type="InterPro" id="IPR036068">
    <property type="entry name" value="Nicotinate_pribotase-like_C"/>
</dbReference>
<dbReference type="InterPro" id="IPR037128">
    <property type="entry name" value="Quinolinate_PRibosylTase_N_sf"/>
</dbReference>
<dbReference type="InterPro" id="IPR002638">
    <property type="entry name" value="Quinolinate_PRibosylTrfase_C"/>
</dbReference>
<dbReference type="InterPro" id="IPR022412">
    <property type="entry name" value="Quinolinate_PRibosylTrfase_N"/>
</dbReference>
<dbReference type="NCBIfam" id="TIGR00078">
    <property type="entry name" value="nadC"/>
    <property type="match status" value="1"/>
</dbReference>
<dbReference type="PANTHER" id="PTHR32179">
    <property type="entry name" value="NICOTINATE-NUCLEOTIDE PYROPHOSPHORYLASE [CARBOXYLATING]"/>
    <property type="match status" value="1"/>
</dbReference>
<dbReference type="PANTHER" id="PTHR32179:SF3">
    <property type="entry name" value="NICOTINATE-NUCLEOTIDE PYROPHOSPHORYLASE [CARBOXYLATING]"/>
    <property type="match status" value="1"/>
</dbReference>
<dbReference type="Pfam" id="PF01729">
    <property type="entry name" value="QRPTase_C"/>
    <property type="match status" value="1"/>
</dbReference>
<dbReference type="Pfam" id="PF02749">
    <property type="entry name" value="QRPTase_N"/>
    <property type="match status" value="1"/>
</dbReference>
<dbReference type="PIRSF" id="PIRSF006250">
    <property type="entry name" value="NadC_ModD"/>
    <property type="match status" value="1"/>
</dbReference>
<dbReference type="SUPFAM" id="SSF51690">
    <property type="entry name" value="Nicotinate/Quinolinate PRTase C-terminal domain-like"/>
    <property type="match status" value="1"/>
</dbReference>
<dbReference type="SUPFAM" id="SSF54675">
    <property type="entry name" value="Nicotinate/Quinolinate PRTase N-terminal domain-like"/>
    <property type="match status" value="1"/>
</dbReference>
<proteinExistence type="inferred from homology"/>
<feature type="chain" id="PRO_0000155951" description="Probable nicotinate-nucleotide pyrophosphorylase [carboxylating]">
    <location>
        <begin position="1"/>
        <end position="258"/>
    </location>
</feature>
<feature type="binding site" evidence="1">
    <location>
        <position position="74"/>
    </location>
    <ligand>
        <name>substrate</name>
    </ligand>
</feature>
<feature type="binding site" evidence="1">
    <location>
        <begin position="109"/>
        <end position="111"/>
    </location>
    <ligand>
        <name>substrate</name>
    </ligand>
</feature>
<feature type="binding site" evidence="1">
    <location>
        <position position="133"/>
    </location>
    <ligand>
        <name>substrate</name>
    </ligand>
</feature>
<feature type="binding site" evidence="1">
    <location>
        <position position="143"/>
    </location>
    <ligand>
        <name>substrate</name>
    </ligand>
</feature>
<feature type="binding site" evidence="1">
    <location>
        <position position="170"/>
    </location>
    <ligand>
        <name>substrate</name>
    </ligand>
</feature>
<feature type="binding site" evidence="1">
    <location>
        <position position="191"/>
    </location>
    <ligand>
        <name>substrate</name>
    </ligand>
</feature>
<feature type="binding site" evidence="1">
    <location>
        <begin position="219"/>
        <end position="221"/>
    </location>
    <ligand>
        <name>substrate</name>
    </ligand>
</feature>
<feature type="binding site" evidence="1">
    <location>
        <begin position="240"/>
        <end position="242"/>
    </location>
    <ligand>
        <name>substrate</name>
    </ligand>
</feature>